<dbReference type="EC" id="3.1.26.5" evidence="1"/>
<dbReference type="EMBL" id="AP009240">
    <property type="protein sequence ID" value="BAG79514.1"/>
    <property type="molecule type" value="Genomic_DNA"/>
</dbReference>
<dbReference type="RefSeq" id="WP_000239730.1">
    <property type="nucleotide sequence ID" value="NC_011415.1"/>
</dbReference>
<dbReference type="SMR" id="B6I3T7"/>
<dbReference type="GeneID" id="93778446"/>
<dbReference type="KEGG" id="ecy:ECSE_3990"/>
<dbReference type="HOGENOM" id="CLU_117179_11_0_6"/>
<dbReference type="Proteomes" id="UP000008199">
    <property type="component" value="Chromosome"/>
</dbReference>
<dbReference type="GO" id="GO:0030677">
    <property type="term" value="C:ribonuclease P complex"/>
    <property type="evidence" value="ECO:0007669"/>
    <property type="project" value="TreeGrafter"/>
</dbReference>
<dbReference type="GO" id="GO:0042781">
    <property type="term" value="F:3'-tRNA processing endoribonuclease activity"/>
    <property type="evidence" value="ECO:0007669"/>
    <property type="project" value="TreeGrafter"/>
</dbReference>
<dbReference type="GO" id="GO:0004526">
    <property type="term" value="F:ribonuclease P activity"/>
    <property type="evidence" value="ECO:0007669"/>
    <property type="project" value="UniProtKB-UniRule"/>
</dbReference>
<dbReference type="GO" id="GO:0000049">
    <property type="term" value="F:tRNA binding"/>
    <property type="evidence" value="ECO:0007669"/>
    <property type="project" value="UniProtKB-UniRule"/>
</dbReference>
<dbReference type="GO" id="GO:0001682">
    <property type="term" value="P:tRNA 5'-leader removal"/>
    <property type="evidence" value="ECO:0007669"/>
    <property type="project" value="UniProtKB-UniRule"/>
</dbReference>
<dbReference type="FunFam" id="3.30.230.10:FF:000016">
    <property type="entry name" value="Ribonuclease P protein component"/>
    <property type="match status" value="1"/>
</dbReference>
<dbReference type="Gene3D" id="3.30.230.10">
    <property type="match status" value="1"/>
</dbReference>
<dbReference type="HAMAP" id="MF_00227">
    <property type="entry name" value="RNase_P"/>
    <property type="match status" value="1"/>
</dbReference>
<dbReference type="InterPro" id="IPR020568">
    <property type="entry name" value="Ribosomal_Su5_D2-typ_SF"/>
</dbReference>
<dbReference type="InterPro" id="IPR014721">
    <property type="entry name" value="Ribsml_uS5_D2-typ_fold_subgr"/>
</dbReference>
<dbReference type="InterPro" id="IPR000100">
    <property type="entry name" value="RNase_P"/>
</dbReference>
<dbReference type="InterPro" id="IPR020539">
    <property type="entry name" value="RNase_P_CS"/>
</dbReference>
<dbReference type="NCBIfam" id="TIGR00188">
    <property type="entry name" value="rnpA"/>
    <property type="match status" value="1"/>
</dbReference>
<dbReference type="PANTHER" id="PTHR33992">
    <property type="entry name" value="RIBONUCLEASE P PROTEIN COMPONENT"/>
    <property type="match status" value="1"/>
</dbReference>
<dbReference type="PANTHER" id="PTHR33992:SF1">
    <property type="entry name" value="RIBONUCLEASE P PROTEIN COMPONENT"/>
    <property type="match status" value="1"/>
</dbReference>
<dbReference type="Pfam" id="PF00825">
    <property type="entry name" value="Ribonuclease_P"/>
    <property type="match status" value="1"/>
</dbReference>
<dbReference type="SUPFAM" id="SSF54211">
    <property type="entry name" value="Ribosomal protein S5 domain 2-like"/>
    <property type="match status" value="1"/>
</dbReference>
<dbReference type="PROSITE" id="PS00648">
    <property type="entry name" value="RIBONUCLEASE_P"/>
    <property type="match status" value="1"/>
</dbReference>
<proteinExistence type="inferred from homology"/>
<feature type="chain" id="PRO_1000100358" description="Ribonuclease P protein component">
    <location>
        <begin position="1"/>
        <end position="119"/>
    </location>
</feature>
<gene>
    <name evidence="1" type="primary">rnpA</name>
    <name type="ordered locus">ECSE_3990</name>
</gene>
<comment type="function">
    <text evidence="1">RNaseP catalyzes the removal of the 5'-leader sequence from pre-tRNA to produce the mature 5'-terminus. It can also cleave other RNA substrates such as 4.5S RNA. The protein component plays an auxiliary but essential role in vivo by binding to the 5'-leader sequence and broadening the substrate specificity of the ribozyme.</text>
</comment>
<comment type="catalytic activity">
    <reaction evidence="1">
        <text>Endonucleolytic cleavage of RNA, removing 5'-extranucleotides from tRNA precursor.</text>
        <dbReference type="EC" id="3.1.26.5"/>
    </reaction>
</comment>
<comment type="subunit">
    <text evidence="1">Consists of a catalytic RNA component (M1 or rnpB) and a protein subunit.</text>
</comment>
<comment type="similarity">
    <text evidence="1">Belongs to the RnpA family.</text>
</comment>
<sequence length="119" mass="13789">MVKLAFPRELRLLTPSQFTFVFQQPQRAGTPQITILGRLNSLGHPRIGLTVAKKNVRRAHERNRIKRLTRESFRLRQHELPAMDFVVVAKKGVADLDNRALSEALEKLWRRHCRLARGS</sequence>
<evidence type="ECO:0000255" key="1">
    <source>
        <dbReference type="HAMAP-Rule" id="MF_00227"/>
    </source>
</evidence>
<reference key="1">
    <citation type="journal article" date="2008" name="DNA Res.">
        <title>Complete genome sequence and comparative analysis of the wild-type commensal Escherichia coli strain SE11 isolated from a healthy adult.</title>
        <authorList>
            <person name="Oshima K."/>
            <person name="Toh H."/>
            <person name="Ogura Y."/>
            <person name="Sasamoto H."/>
            <person name="Morita H."/>
            <person name="Park S.-H."/>
            <person name="Ooka T."/>
            <person name="Iyoda S."/>
            <person name="Taylor T.D."/>
            <person name="Hayashi T."/>
            <person name="Itoh K."/>
            <person name="Hattori M."/>
        </authorList>
    </citation>
    <scope>NUCLEOTIDE SEQUENCE [LARGE SCALE GENOMIC DNA]</scope>
    <source>
        <strain>SE11</strain>
    </source>
</reference>
<protein>
    <recommendedName>
        <fullName evidence="1">Ribonuclease P protein component</fullName>
        <shortName evidence="1">RNase P protein</shortName>
        <shortName evidence="1">RNaseP protein</shortName>
        <ecNumber evidence="1">3.1.26.5</ecNumber>
    </recommendedName>
    <alternativeName>
        <fullName evidence="1">Protein C5</fullName>
    </alternativeName>
</protein>
<keyword id="KW-0255">Endonuclease</keyword>
<keyword id="KW-0378">Hydrolase</keyword>
<keyword id="KW-0540">Nuclease</keyword>
<keyword id="KW-0694">RNA-binding</keyword>
<keyword id="KW-0819">tRNA processing</keyword>
<organism>
    <name type="scientific">Escherichia coli (strain SE11)</name>
    <dbReference type="NCBI Taxonomy" id="409438"/>
    <lineage>
        <taxon>Bacteria</taxon>
        <taxon>Pseudomonadati</taxon>
        <taxon>Pseudomonadota</taxon>
        <taxon>Gammaproteobacteria</taxon>
        <taxon>Enterobacterales</taxon>
        <taxon>Enterobacteriaceae</taxon>
        <taxon>Escherichia</taxon>
    </lineage>
</organism>
<accession>B6I3T7</accession>
<name>RNPA_ECOSE</name>